<proteinExistence type="evidence at transcript level"/>
<reference key="1">
    <citation type="submission" date="2005-06" db="EMBL/GenBank/DDBJ databases">
        <title>DNA sequences of macaque genes expressed in brain or testis and its evolutionary implications.</title>
        <authorList>
            <consortium name="International consortium for macaque cDNA sequencing and analysis"/>
        </authorList>
    </citation>
    <scope>NUCLEOTIDE SEQUENCE [LARGE SCALE MRNA]</scope>
    <source>
        <tissue>Testis</tissue>
    </source>
</reference>
<feature type="chain" id="PRO_0000089269" description="Calcium-binding tyrosine phosphorylation-regulated protein">
    <location>
        <begin position="1"/>
        <end position="487"/>
    </location>
</feature>
<feature type="domain" description="RIIa">
    <location>
        <begin position="12"/>
        <end position="49"/>
    </location>
</feature>
<feature type="region of interest" description="Disordered" evidence="2">
    <location>
        <begin position="78"/>
        <end position="163"/>
    </location>
</feature>
<feature type="region of interest" description="Disordered" evidence="2">
    <location>
        <begin position="243"/>
        <end position="271"/>
    </location>
</feature>
<feature type="region of interest" description="Disordered" evidence="2">
    <location>
        <begin position="420"/>
        <end position="487"/>
    </location>
</feature>
<feature type="compositionally biased region" description="Basic and acidic residues" evidence="2">
    <location>
        <begin position="78"/>
        <end position="91"/>
    </location>
</feature>
<feature type="compositionally biased region" description="Basic and acidic residues" evidence="2">
    <location>
        <begin position="101"/>
        <end position="117"/>
    </location>
</feature>
<feature type="compositionally biased region" description="Low complexity" evidence="2">
    <location>
        <begin position="140"/>
        <end position="152"/>
    </location>
</feature>
<feature type="compositionally biased region" description="Polar residues" evidence="2">
    <location>
        <begin position="420"/>
        <end position="436"/>
    </location>
</feature>
<feature type="compositionally biased region" description="Polar residues" evidence="2">
    <location>
        <begin position="455"/>
        <end position="464"/>
    </location>
</feature>
<feature type="compositionally biased region" description="Acidic residues" evidence="2">
    <location>
        <begin position="478"/>
        <end position="487"/>
    </location>
</feature>
<feature type="sequence conflict" description="In Ref. 1; BAE02189." evidence="3" ref="1">
    <original>L</original>
    <variation>P</variation>
    <location>
        <position position="231"/>
    </location>
</feature>
<feature type="sequence conflict" description="In Ref. 1; BAE02189." evidence="3" ref="1">
    <original>M</original>
    <variation>V</variation>
    <location>
        <position position="288"/>
    </location>
</feature>
<feature type="sequence conflict" description="In Ref. 1; BAE02177." evidence="3" ref="1">
    <original>P</original>
    <variation>L</variation>
    <location>
        <position position="319"/>
    </location>
</feature>
<name>CABYR_MACFA</name>
<dbReference type="EMBL" id="AB179126">
    <property type="protein sequence ID" value="BAE02177.1"/>
    <property type="status" value="ALT_INIT"/>
    <property type="molecule type" value="mRNA"/>
</dbReference>
<dbReference type="EMBL" id="AB179138">
    <property type="protein sequence ID" value="BAE02189.1"/>
    <property type="status" value="ALT_FRAME"/>
    <property type="molecule type" value="mRNA"/>
</dbReference>
<dbReference type="EMBL" id="AB179372">
    <property type="protein sequence ID" value="BAE02423.1"/>
    <property type="status" value="ALT_INIT"/>
    <property type="molecule type" value="mRNA"/>
</dbReference>
<dbReference type="RefSeq" id="NP_001270695.1">
    <property type="nucleotide sequence ID" value="NM_001283766.1"/>
</dbReference>
<dbReference type="RefSeq" id="XP_015295275.1">
    <property type="nucleotide sequence ID" value="XM_015439789.1"/>
</dbReference>
<dbReference type="RefSeq" id="XP_015295276.1">
    <property type="nucleotide sequence ID" value="XM_015439790.1"/>
</dbReference>
<dbReference type="RefSeq" id="XP_015295277.1">
    <property type="nucleotide sequence ID" value="XM_015439791.3"/>
</dbReference>
<dbReference type="RefSeq" id="XP_015295278.1">
    <property type="nucleotide sequence ID" value="XM_015439792.3"/>
</dbReference>
<dbReference type="RefSeq" id="XP_065390062.1">
    <property type="nucleotide sequence ID" value="XM_065533990.1"/>
</dbReference>
<dbReference type="SMR" id="Q4R3X7"/>
<dbReference type="STRING" id="9541.ENSMFAP00000010521"/>
<dbReference type="Ensembl" id="ENSMFAT00000041134.2">
    <property type="protein sequence ID" value="ENSMFAP00000010521.1"/>
    <property type="gene ID" value="ENSMFAG00000007440.2"/>
</dbReference>
<dbReference type="GeneID" id="101926492"/>
<dbReference type="CTD" id="26256"/>
<dbReference type="VEuPathDB" id="HostDB:ENSMFAG00000007440"/>
<dbReference type="eggNOG" id="ENOG502S1NF">
    <property type="taxonomic scope" value="Eukaryota"/>
</dbReference>
<dbReference type="GeneTree" id="ENSGT00390000000444"/>
<dbReference type="OMA" id="MCKNPVE"/>
<dbReference type="Proteomes" id="UP000233100">
    <property type="component" value="Chromosome 18"/>
</dbReference>
<dbReference type="Bgee" id="ENSMFAG00000007440">
    <property type="expression patterns" value="Expressed in liver and 13 other cell types or tissues"/>
</dbReference>
<dbReference type="GO" id="GO:0005737">
    <property type="term" value="C:cytoplasm"/>
    <property type="evidence" value="ECO:0007669"/>
    <property type="project" value="UniProtKB-SubCell"/>
</dbReference>
<dbReference type="GO" id="GO:0005856">
    <property type="term" value="C:cytoskeleton"/>
    <property type="evidence" value="ECO:0007669"/>
    <property type="project" value="UniProtKB-SubCell"/>
</dbReference>
<dbReference type="GO" id="GO:0035686">
    <property type="term" value="C:sperm fibrous sheath"/>
    <property type="evidence" value="ECO:0007669"/>
    <property type="project" value="TreeGrafter"/>
</dbReference>
<dbReference type="GO" id="GO:0097228">
    <property type="term" value="C:sperm principal piece"/>
    <property type="evidence" value="ECO:0000250"/>
    <property type="project" value="UniProtKB"/>
</dbReference>
<dbReference type="GO" id="GO:0005509">
    <property type="term" value="F:calcium ion binding"/>
    <property type="evidence" value="ECO:0007669"/>
    <property type="project" value="InterPro"/>
</dbReference>
<dbReference type="GO" id="GO:0048240">
    <property type="term" value="P:sperm capacitation"/>
    <property type="evidence" value="ECO:0007669"/>
    <property type="project" value="InterPro"/>
</dbReference>
<dbReference type="CDD" id="cd12100">
    <property type="entry name" value="DD_CABYR_SP17"/>
    <property type="match status" value="1"/>
</dbReference>
<dbReference type="FunFam" id="1.20.890.10:FF:000005">
    <property type="entry name" value="calcium-binding tyrosine phosphorylation-regulated protein isoform X1"/>
    <property type="match status" value="1"/>
</dbReference>
<dbReference type="Gene3D" id="1.20.890.10">
    <property type="entry name" value="cAMP-dependent protein kinase regulatory subunit, dimerization-anchoring domain"/>
    <property type="match status" value="1"/>
</dbReference>
<dbReference type="InterPro" id="IPR038848">
    <property type="entry name" value="CABYR"/>
</dbReference>
<dbReference type="InterPro" id="IPR003117">
    <property type="entry name" value="cAMP_dep_PK_reg_su_I/II_a/b"/>
</dbReference>
<dbReference type="InterPro" id="IPR047579">
    <property type="entry name" value="DD_CABYR_SP17"/>
</dbReference>
<dbReference type="PANTHER" id="PTHR15494">
    <property type="entry name" value="CALCIUM-BINDING TYROSINE PHOSPHORYLATION-REGULATED PROTEIN"/>
    <property type="match status" value="1"/>
</dbReference>
<dbReference type="PANTHER" id="PTHR15494:SF0">
    <property type="entry name" value="CALCIUM-BINDING TYROSINE PHOSPHORYLATION-REGULATED PROTEIN"/>
    <property type="match status" value="1"/>
</dbReference>
<dbReference type="Pfam" id="PF02197">
    <property type="entry name" value="RIIa"/>
    <property type="match status" value="1"/>
</dbReference>
<dbReference type="SMART" id="SM00394">
    <property type="entry name" value="RIIa"/>
    <property type="match status" value="1"/>
</dbReference>
<dbReference type="SUPFAM" id="SSF47391">
    <property type="entry name" value="Dimerization-anchoring domain of cAMP-dependent PK regulatory subunit"/>
    <property type="match status" value="1"/>
</dbReference>
<organism>
    <name type="scientific">Macaca fascicularis</name>
    <name type="common">Crab-eating macaque</name>
    <name type="synonym">Cynomolgus monkey</name>
    <dbReference type="NCBI Taxonomy" id="9541"/>
    <lineage>
        <taxon>Eukaryota</taxon>
        <taxon>Metazoa</taxon>
        <taxon>Chordata</taxon>
        <taxon>Craniata</taxon>
        <taxon>Vertebrata</taxon>
        <taxon>Euteleostomi</taxon>
        <taxon>Mammalia</taxon>
        <taxon>Eutheria</taxon>
        <taxon>Euarchontoglires</taxon>
        <taxon>Primates</taxon>
        <taxon>Haplorrhini</taxon>
        <taxon>Catarrhini</taxon>
        <taxon>Cercopithecidae</taxon>
        <taxon>Cercopithecinae</taxon>
        <taxon>Macaca</taxon>
    </lineage>
</organism>
<evidence type="ECO:0000250" key="1"/>
<evidence type="ECO:0000256" key="2">
    <source>
        <dbReference type="SAM" id="MobiDB-lite"/>
    </source>
</evidence>
<evidence type="ECO:0000305" key="3"/>
<gene>
    <name type="primary">CABYR</name>
    <name type="ORF">QtsA-13213</name>
    <name type="ORF">QtsA-13395</name>
    <name type="ORF">QtsA-18586</name>
</gene>
<sequence length="487" mass="51866">MISSKPRLVVPYGLKTLLEGISRAVLKTNPSDINQFAAAYFQELTMYRGNTTVDIKDLVKQFHQIKVEKWSEGTTPQKKLECLKEPEKTSVESKVPTQMEKSTDTDEDNVTRTEYSDKTTQFPSVYAEPGAEQTEAVGDSSSKPATPKATTPPSSPPPTAVSPEFAYVPADPAQLAAQMLGKVSSIHSDQSDVLMVDVATSMPVVIEEVPSSEAAEDVMVAAPLVCSGKVLEVQVVSQTSVHVDLGSQPKENEAEQSTASSVPLQDEQEPPAYDQAPEVTLQADIEVMSTVHISSVYNDVPVIEGVVYIEQLPEQIVTPFTDQVACLKENEQSPPVSPKSVVEKTTSGISKKSVESVELAQLEENAKYSSVYVEAEAAALLSDTSLKGQPEVPAQLLDAEGAVKIGSEKSLHLEVGITSIVSDNTGQEESGENSVPQEMEGKPVLSGEAAEAVHSGTSVKSSSGPFPPAPEGLTAPEIEPEGEATAE</sequence>
<protein>
    <recommendedName>
        <fullName>Calcium-binding tyrosine phosphorylation-regulated protein</fullName>
    </recommendedName>
</protein>
<comment type="function">
    <text evidence="1">May function as a regulator of both motility- and head-associated functions such as capacitation and the acrosome reaction. May bind calcium in vitro (By similarity).</text>
</comment>
<comment type="subunit">
    <text evidence="1">Interacts with FSCB.</text>
</comment>
<comment type="subcellular location">
    <subcellularLocation>
        <location evidence="1">Cytoplasm</location>
    </subcellularLocation>
    <subcellularLocation>
        <location evidence="1">Cytoplasm</location>
        <location evidence="1">Cytoskeleton</location>
    </subcellularLocation>
    <subcellularLocation>
        <location evidence="1">Cell projection</location>
        <location evidence="1">Cilium</location>
        <location evidence="1">Flagellum</location>
    </subcellularLocation>
    <text evidence="1">Localized to fibrous sheath including the surface of the longitudinal columns and ribs of the principal piece of sperm flagella.</text>
</comment>
<comment type="PTM">
    <text evidence="1">Phosphorylated on tyrosine residues during in vitro capacitation. Dephosphorylation affects its ability to bind calcium (By similarity).</text>
</comment>
<comment type="sequence caution" evidence="3">
    <conflict type="erroneous initiation">
        <sequence resource="EMBL-CDS" id="BAE02177"/>
    </conflict>
</comment>
<comment type="sequence caution" evidence="3">
    <conflict type="frameshift">
        <sequence resource="EMBL-CDS" id="BAE02189"/>
    </conflict>
</comment>
<comment type="sequence caution" evidence="3">
    <conflict type="erroneous initiation">
        <sequence resource="EMBL-CDS" id="BAE02423"/>
    </conflict>
</comment>
<keyword id="KW-0106">Calcium</keyword>
<keyword id="KW-0966">Cell projection</keyword>
<keyword id="KW-0969">Cilium</keyword>
<keyword id="KW-0963">Cytoplasm</keyword>
<keyword id="KW-0206">Cytoskeleton</keyword>
<keyword id="KW-0282">Flagellum</keyword>
<keyword id="KW-0479">Metal-binding</keyword>
<keyword id="KW-0597">Phosphoprotein</keyword>
<keyword id="KW-1185">Reference proteome</keyword>
<accession>Q4R3X7</accession>
<accession>Q4R394</accession>
<accession>Q4R3Y9</accession>